<reference key="1">
    <citation type="journal article" date="2004" name="Proc. Natl. Acad. Sci. U.S.A.">
        <title>Insights into the evolution of Yersinia pestis through whole-genome comparison with Yersinia pseudotuberculosis.</title>
        <authorList>
            <person name="Chain P.S.G."/>
            <person name="Carniel E."/>
            <person name="Larimer F.W."/>
            <person name="Lamerdin J."/>
            <person name="Stoutland P.O."/>
            <person name="Regala W.M."/>
            <person name="Georgescu A.M."/>
            <person name="Vergez L.M."/>
            <person name="Land M.L."/>
            <person name="Motin V.L."/>
            <person name="Brubaker R.R."/>
            <person name="Fowler J."/>
            <person name="Hinnebusch J."/>
            <person name="Marceau M."/>
            <person name="Medigue C."/>
            <person name="Simonet M."/>
            <person name="Chenal-Francisque V."/>
            <person name="Souza B."/>
            <person name="Dacheux D."/>
            <person name="Elliott J.M."/>
            <person name="Derbise A."/>
            <person name="Hauser L.J."/>
            <person name="Garcia E."/>
        </authorList>
    </citation>
    <scope>NUCLEOTIDE SEQUENCE [LARGE SCALE GENOMIC DNA]</scope>
    <source>
        <strain>IP32953</strain>
    </source>
</reference>
<proteinExistence type="inferred from homology"/>
<evidence type="ECO:0000255" key="1">
    <source>
        <dbReference type="HAMAP-Rule" id="MF_00218"/>
    </source>
</evidence>
<sequence length="355" mass="39299">MNELKNDRYLRALLRQPVDMTPVWMMRQAGRYLPEYKATRAIAGDFMSLCKNAELACEVTMQPLRRYPLDAAILFSDILTIPDAMGLGLYFETGEGPRFQSPITCRADVEKLPIPDPEQELGYVMNAVRTIRRELAGSVPLIGFSGSPWTLATYMVEGGSSKAFTKLKKMMYAEPQTLHLLLDKLADSVILYLNAQIKAGAQSVMIFDTWGGVLTGRDYHEFSLNYMHKIVDGLIRENEGRRVPVTLFTKGGGQWLEAMAATGCDALGLDWTTDIADARRRVGDKVALQGNMDPSVLYAPPARIEQEVSTILASFGQGEGHVFNLGHGIHQDVPPAHAGAFVNAVHALSRPYHQK</sequence>
<comment type="function">
    <text evidence="1">Catalyzes the decarboxylation of four acetate groups of uroporphyrinogen-III to yield coproporphyrinogen-III.</text>
</comment>
<comment type="catalytic activity">
    <reaction evidence="1">
        <text>uroporphyrinogen III + 4 H(+) = coproporphyrinogen III + 4 CO2</text>
        <dbReference type="Rhea" id="RHEA:19865"/>
        <dbReference type="ChEBI" id="CHEBI:15378"/>
        <dbReference type="ChEBI" id="CHEBI:16526"/>
        <dbReference type="ChEBI" id="CHEBI:57308"/>
        <dbReference type="ChEBI" id="CHEBI:57309"/>
        <dbReference type="EC" id="4.1.1.37"/>
    </reaction>
</comment>
<comment type="pathway">
    <text evidence="1">Porphyrin-containing compound metabolism; protoporphyrin-IX biosynthesis; coproporphyrinogen-III from 5-aminolevulinate: step 4/4.</text>
</comment>
<comment type="subunit">
    <text evidence="1">Homodimer.</text>
</comment>
<comment type="subcellular location">
    <subcellularLocation>
        <location evidence="1">Cytoplasm</location>
    </subcellularLocation>
</comment>
<comment type="similarity">
    <text evidence="1">Belongs to the uroporphyrinogen decarboxylase family.</text>
</comment>
<feature type="chain" id="PRO_1000024006" description="Uroporphyrinogen decarboxylase">
    <location>
        <begin position="1"/>
        <end position="355"/>
    </location>
</feature>
<feature type="binding site" evidence="1">
    <location>
        <begin position="27"/>
        <end position="31"/>
    </location>
    <ligand>
        <name>substrate</name>
    </ligand>
</feature>
<feature type="binding site" evidence="1">
    <location>
        <position position="77"/>
    </location>
    <ligand>
        <name>substrate</name>
    </ligand>
</feature>
<feature type="binding site" evidence="1">
    <location>
        <position position="154"/>
    </location>
    <ligand>
        <name>substrate</name>
    </ligand>
</feature>
<feature type="binding site" evidence="1">
    <location>
        <position position="209"/>
    </location>
    <ligand>
        <name>substrate</name>
    </ligand>
</feature>
<feature type="binding site" evidence="1">
    <location>
        <position position="327"/>
    </location>
    <ligand>
        <name>substrate</name>
    </ligand>
</feature>
<feature type="site" description="Transition state stabilizer" evidence="1">
    <location>
        <position position="77"/>
    </location>
</feature>
<gene>
    <name evidence="1" type="primary">hemE</name>
    <name type="ordered locus">YPTB0294</name>
</gene>
<dbReference type="EC" id="4.1.1.37" evidence="1"/>
<dbReference type="EMBL" id="BX936398">
    <property type="protein sequence ID" value="CAH19534.1"/>
    <property type="molecule type" value="Genomic_DNA"/>
</dbReference>
<dbReference type="RefSeq" id="WP_011191555.1">
    <property type="nucleotide sequence ID" value="NC_006155.1"/>
</dbReference>
<dbReference type="SMR" id="Q66FP1"/>
<dbReference type="GeneID" id="49787714"/>
<dbReference type="KEGG" id="ypo:BZ17_2279"/>
<dbReference type="KEGG" id="yps:YPTB0294"/>
<dbReference type="PATRIC" id="fig|273123.14.peg.2410"/>
<dbReference type="UniPathway" id="UPA00251">
    <property type="reaction ID" value="UER00321"/>
</dbReference>
<dbReference type="Proteomes" id="UP000001011">
    <property type="component" value="Chromosome"/>
</dbReference>
<dbReference type="GO" id="GO:0005829">
    <property type="term" value="C:cytosol"/>
    <property type="evidence" value="ECO:0007669"/>
    <property type="project" value="TreeGrafter"/>
</dbReference>
<dbReference type="GO" id="GO:0004853">
    <property type="term" value="F:uroporphyrinogen decarboxylase activity"/>
    <property type="evidence" value="ECO:0007669"/>
    <property type="project" value="UniProtKB-UniRule"/>
</dbReference>
<dbReference type="GO" id="GO:0019353">
    <property type="term" value="P:protoporphyrinogen IX biosynthetic process from glutamate"/>
    <property type="evidence" value="ECO:0007669"/>
    <property type="project" value="TreeGrafter"/>
</dbReference>
<dbReference type="CDD" id="cd00717">
    <property type="entry name" value="URO-D"/>
    <property type="match status" value="1"/>
</dbReference>
<dbReference type="FunFam" id="3.20.20.210:FF:000001">
    <property type="entry name" value="Uroporphyrinogen decarboxylase"/>
    <property type="match status" value="1"/>
</dbReference>
<dbReference type="Gene3D" id="3.20.20.210">
    <property type="match status" value="1"/>
</dbReference>
<dbReference type="HAMAP" id="MF_00218">
    <property type="entry name" value="URO_D"/>
    <property type="match status" value="1"/>
</dbReference>
<dbReference type="InterPro" id="IPR038071">
    <property type="entry name" value="UROD/MetE-like_sf"/>
</dbReference>
<dbReference type="InterPro" id="IPR006361">
    <property type="entry name" value="Uroporphyrinogen_deCO2ase_HemE"/>
</dbReference>
<dbReference type="InterPro" id="IPR000257">
    <property type="entry name" value="Uroporphyrinogen_deCOase"/>
</dbReference>
<dbReference type="NCBIfam" id="TIGR01464">
    <property type="entry name" value="hemE"/>
    <property type="match status" value="1"/>
</dbReference>
<dbReference type="PANTHER" id="PTHR21091">
    <property type="entry name" value="METHYLTETRAHYDROFOLATE:HOMOCYSTEINE METHYLTRANSFERASE RELATED"/>
    <property type="match status" value="1"/>
</dbReference>
<dbReference type="PANTHER" id="PTHR21091:SF169">
    <property type="entry name" value="UROPORPHYRINOGEN DECARBOXYLASE"/>
    <property type="match status" value="1"/>
</dbReference>
<dbReference type="Pfam" id="PF01208">
    <property type="entry name" value="URO-D"/>
    <property type="match status" value="1"/>
</dbReference>
<dbReference type="SUPFAM" id="SSF51726">
    <property type="entry name" value="UROD/MetE-like"/>
    <property type="match status" value="1"/>
</dbReference>
<dbReference type="PROSITE" id="PS00906">
    <property type="entry name" value="UROD_1"/>
    <property type="match status" value="1"/>
</dbReference>
<dbReference type="PROSITE" id="PS00907">
    <property type="entry name" value="UROD_2"/>
    <property type="match status" value="1"/>
</dbReference>
<name>DCUP_YERPS</name>
<organism>
    <name type="scientific">Yersinia pseudotuberculosis serotype I (strain IP32953)</name>
    <dbReference type="NCBI Taxonomy" id="273123"/>
    <lineage>
        <taxon>Bacteria</taxon>
        <taxon>Pseudomonadati</taxon>
        <taxon>Pseudomonadota</taxon>
        <taxon>Gammaproteobacteria</taxon>
        <taxon>Enterobacterales</taxon>
        <taxon>Yersiniaceae</taxon>
        <taxon>Yersinia</taxon>
    </lineage>
</organism>
<protein>
    <recommendedName>
        <fullName evidence="1">Uroporphyrinogen decarboxylase</fullName>
        <shortName evidence="1">UPD</shortName>
        <shortName evidence="1">URO-D</shortName>
        <ecNumber evidence="1">4.1.1.37</ecNumber>
    </recommendedName>
</protein>
<keyword id="KW-0963">Cytoplasm</keyword>
<keyword id="KW-0210">Decarboxylase</keyword>
<keyword id="KW-0456">Lyase</keyword>
<keyword id="KW-0627">Porphyrin biosynthesis</keyword>
<accession>Q66FP1</accession>